<feature type="chain" id="PRO_1000081380" description="UPF0178 protein Mmwyl1_2258">
    <location>
        <begin position="1"/>
        <end position="149"/>
    </location>
</feature>
<sequence length="149" mass="16667">MRLWVDADACPNVIKTILFRAAERLEISCILVANQAISIPPSKWIERRVVSAGFDVADNYIVDNVDIQDLVITADIPLASDVIEKGALAINPRGELYTKENIKQRLGMRDFMEQMRSSGIQTGGPTVFSQQDRMAFANTLDKLLAQRMK</sequence>
<dbReference type="EMBL" id="CP000749">
    <property type="protein sequence ID" value="ABR71180.1"/>
    <property type="molecule type" value="Genomic_DNA"/>
</dbReference>
<dbReference type="STRING" id="400668.Mmwyl1_2258"/>
<dbReference type="KEGG" id="mmw:Mmwyl1_2258"/>
<dbReference type="eggNOG" id="COG1671">
    <property type="taxonomic scope" value="Bacteria"/>
</dbReference>
<dbReference type="HOGENOM" id="CLU_106619_2_1_6"/>
<dbReference type="OrthoDB" id="9798918at2"/>
<dbReference type="CDD" id="cd18720">
    <property type="entry name" value="PIN_YqxD-like"/>
    <property type="match status" value="1"/>
</dbReference>
<dbReference type="HAMAP" id="MF_00489">
    <property type="entry name" value="UPF0178"/>
    <property type="match status" value="1"/>
</dbReference>
<dbReference type="InterPro" id="IPR003791">
    <property type="entry name" value="UPF0178"/>
</dbReference>
<dbReference type="NCBIfam" id="NF001095">
    <property type="entry name" value="PRK00124.1"/>
    <property type="match status" value="1"/>
</dbReference>
<dbReference type="PANTHER" id="PTHR35146">
    <property type="entry name" value="UPF0178 PROTEIN YAII"/>
    <property type="match status" value="1"/>
</dbReference>
<dbReference type="PANTHER" id="PTHR35146:SF1">
    <property type="entry name" value="UPF0178 PROTEIN YAII"/>
    <property type="match status" value="1"/>
</dbReference>
<dbReference type="Pfam" id="PF02639">
    <property type="entry name" value="DUF188"/>
    <property type="match status" value="1"/>
</dbReference>
<reference key="1">
    <citation type="submission" date="2007-06" db="EMBL/GenBank/DDBJ databases">
        <title>Complete sequence of Marinomonas sp. MWYL1.</title>
        <authorList>
            <consortium name="US DOE Joint Genome Institute"/>
            <person name="Copeland A."/>
            <person name="Lucas S."/>
            <person name="Lapidus A."/>
            <person name="Barry K."/>
            <person name="Glavina del Rio T."/>
            <person name="Dalin E."/>
            <person name="Tice H."/>
            <person name="Pitluck S."/>
            <person name="Kiss H."/>
            <person name="Brettin T."/>
            <person name="Bruce D."/>
            <person name="Detter J.C."/>
            <person name="Han C."/>
            <person name="Schmutz J."/>
            <person name="Larimer F."/>
            <person name="Land M."/>
            <person name="Hauser L."/>
            <person name="Kyrpides N."/>
            <person name="Kim E."/>
            <person name="Johnston A.W.B."/>
            <person name="Todd J.D."/>
            <person name="Rogers R."/>
            <person name="Wexler M."/>
            <person name="Bond P.L."/>
            <person name="Li Y."/>
            <person name="Richardson P."/>
        </authorList>
    </citation>
    <scope>NUCLEOTIDE SEQUENCE [LARGE SCALE GENOMIC DNA]</scope>
    <source>
        <strain>MWYL1</strain>
    </source>
</reference>
<gene>
    <name type="ordered locus">Mmwyl1_2258</name>
</gene>
<name>Y2258_MARMS</name>
<accession>A6VXK1</accession>
<comment type="similarity">
    <text evidence="1">Belongs to the UPF0178 family.</text>
</comment>
<organism>
    <name type="scientific">Marinomonas sp. (strain MWYL1)</name>
    <dbReference type="NCBI Taxonomy" id="400668"/>
    <lineage>
        <taxon>Bacteria</taxon>
        <taxon>Pseudomonadati</taxon>
        <taxon>Pseudomonadota</taxon>
        <taxon>Gammaproteobacteria</taxon>
        <taxon>Oceanospirillales</taxon>
        <taxon>Oceanospirillaceae</taxon>
        <taxon>Marinomonas</taxon>
    </lineage>
</organism>
<protein>
    <recommendedName>
        <fullName evidence="1">UPF0178 protein Mmwyl1_2258</fullName>
    </recommendedName>
</protein>
<evidence type="ECO:0000255" key="1">
    <source>
        <dbReference type="HAMAP-Rule" id="MF_00489"/>
    </source>
</evidence>
<proteinExistence type="inferred from homology"/>